<comment type="function">
    <text evidence="3">Does not induce flaccid paralysis when injected into blowfly larvae and lacks hemolytic activity.</text>
</comment>
<comment type="subcellular location">
    <subcellularLocation>
        <location evidence="2">Secreted</location>
    </subcellularLocation>
</comment>
<comment type="similarity">
    <text evidence="5">Belongs to the hydralysin family.</text>
</comment>
<protein>
    <recommendedName>
        <fullName>Hydralysin-3</fullName>
    </recommendedName>
</protein>
<organism>
    <name type="scientific">Hydra viridissima</name>
    <name type="common">Green hydra</name>
    <name type="synonym">Chlorohydra viridissima</name>
    <dbReference type="NCBI Taxonomy" id="6082"/>
    <lineage>
        <taxon>Eukaryota</taxon>
        <taxon>Metazoa</taxon>
        <taxon>Cnidaria</taxon>
        <taxon>Hydrozoa</taxon>
        <taxon>Hydroidolina</taxon>
        <taxon>Anthoathecata</taxon>
        <taxon>Aplanulata</taxon>
        <taxon>Hydridae</taxon>
        <taxon>Hydra</taxon>
    </lineage>
</organism>
<name>HLYS3_HYDVD</name>
<evidence type="ECO:0000250" key="1"/>
<evidence type="ECO:0000250" key="2">
    <source>
        <dbReference type="UniProtKB" id="Q86LR2"/>
    </source>
</evidence>
<evidence type="ECO:0000269" key="3">
    <source>
    </source>
</evidence>
<evidence type="ECO:0000303" key="4">
    <source>
    </source>
</evidence>
<evidence type="ECO:0000305" key="5"/>
<evidence type="ECO:0000312" key="6">
    <source>
        <dbReference type="EMBL" id="AAX89441.1"/>
    </source>
</evidence>
<proteinExistence type="evidence at transcript level"/>
<gene>
    <name evidence="4" type="primary">Hln-3</name>
</gene>
<feature type="initiator methionine" description="Removed" evidence="1">
    <location>
        <position position="1"/>
    </location>
</feature>
<feature type="chain" id="PRO_0000221560" description="Hydralysin-3">
    <location>
        <begin position="2"/>
        <end position="218"/>
    </location>
</feature>
<reference evidence="5 6" key="1">
    <citation type="journal article" date="2005" name="J. Biol. Chem.">
        <title>Hydralysins, a new category of beta-pore-forming toxins in cnidaria.</title>
        <authorList>
            <person name="Sher D."/>
            <person name="Fishman Y."/>
            <person name="Zhang M."/>
            <person name="Lebendiker M."/>
            <person name="Gaathon A."/>
            <person name="Mancheno J.-M."/>
            <person name="Zlotkin E."/>
        </authorList>
    </citation>
    <scope>NUCLEOTIDE SEQUENCE [MRNA]</scope>
    <scope>FUNCTION</scope>
</reference>
<dbReference type="EMBL" id="AY967765">
    <property type="protein sequence ID" value="AAX89441.1"/>
    <property type="molecule type" value="mRNA"/>
</dbReference>
<dbReference type="SMR" id="Q52SK6"/>
<dbReference type="GO" id="GO:0005576">
    <property type="term" value="C:extracellular region"/>
    <property type="evidence" value="ECO:0007669"/>
    <property type="project" value="UniProtKB-SubCell"/>
</dbReference>
<dbReference type="GO" id="GO:0090729">
    <property type="term" value="F:toxin activity"/>
    <property type="evidence" value="ECO:0007669"/>
    <property type="project" value="UniProtKB-KW"/>
</dbReference>
<dbReference type="CDD" id="cd21130">
    <property type="entry name" value="parasporin-2-like_N-term"/>
    <property type="match status" value="1"/>
</dbReference>
<dbReference type="CDD" id="cd20222">
    <property type="entry name" value="PFM_parasporin-2-like"/>
    <property type="match status" value="1"/>
</dbReference>
<dbReference type="Gene3D" id="3.10.290.50">
    <property type="match status" value="2"/>
</dbReference>
<dbReference type="SUPFAM" id="SSF56973">
    <property type="entry name" value="Aerolisin/ETX pore-forming domain"/>
    <property type="match status" value="1"/>
</dbReference>
<keyword id="KW-0964">Secreted</keyword>
<keyword id="KW-0800">Toxin</keyword>
<sequence>MGKELLTFSDLRWLDSSPDTVRSAFTREYGTTPDGIALNSEGYFGYHSPPITEQYGRPCYKQTGETKITSQDLSAPTDDVLGSSAAINRGDSPITLTFGVEGVFQMGGEFSLTVSVRKSGSSSVEKTSTSSVQVTVPPRSKVVVSMVGIMKKEKVFFEVPVTVDGSFGANFSSTVQGHYFWFMDARSCLNKTSGVIKGTIDHANVFDVSVEVGPSEPL</sequence>
<accession>Q52SK6</accession>